<proteinExistence type="evidence at transcript level"/>
<keyword id="KW-0165">Cleavage on pair of basic residues</keyword>
<keyword id="KW-0202">Cytokine</keyword>
<keyword id="KW-1015">Disulfide bond</keyword>
<keyword id="KW-0325">Glycoprotein</keyword>
<keyword id="KW-0339">Growth factor</keyword>
<keyword id="KW-0597">Phosphoprotein</keyword>
<keyword id="KW-1185">Reference proteome</keyword>
<keyword id="KW-0964">Secreted</keyword>
<keyword id="KW-0732">Signal</keyword>
<dbReference type="EMBL" id="AB058416">
    <property type="protein sequence ID" value="BAB39768.1"/>
    <property type="molecule type" value="mRNA"/>
</dbReference>
<dbReference type="EMBL" id="AF307092">
    <property type="protein sequence ID" value="AAG38106.1"/>
    <property type="molecule type" value="mRNA"/>
</dbReference>
<dbReference type="RefSeq" id="NP_777106.1">
    <property type="nucleotide sequence ID" value="NM_174681.2"/>
</dbReference>
<dbReference type="SMR" id="Q9GK68"/>
<dbReference type="FunCoup" id="Q9GK68">
    <property type="interactions" value="66"/>
</dbReference>
<dbReference type="STRING" id="9913.ENSBTAP00000012476"/>
<dbReference type="GlyCosmos" id="Q9GK68">
    <property type="glycosylation" value="6 sites, No reported glycans"/>
</dbReference>
<dbReference type="GlyGen" id="Q9GK68">
    <property type="glycosylation" value="6 sites"/>
</dbReference>
<dbReference type="PaxDb" id="9913-ENSBTAP00000012476"/>
<dbReference type="Ensembl" id="ENSBTAT00000012476.2">
    <property type="protein sequence ID" value="ENSBTAP00000012476.1"/>
    <property type="gene ID" value="ENSBTAG00000009478.3"/>
</dbReference>
<dbReference type="GeneID" id="282574"/>
<dbReference type="KEGG" id="bta:282574"/>
<dbReference type="CTD" id="2661"/>
<dbReference type="VEuPathDB" id="HostDB:ENSBTAG00000009478"/>
<dbReference type="VGNC" id="VGNC:29306">
    <property type="gene designation" value="GDF9"/>
</dbReference>
<dbReference type="eggNOG" id="KOG3900">
    <property type="taxonomic scope" value="Eukaryota"/>
</dbReference>
<dbReference type="GeneTree" id="ENSGT00940000159784"/>
<dbReference type="HOGENOM" id="CLU_055377_1_0_1"/>
<dbReference type="InParanoid" id="Q9GK68"/>
<dbReference type="OMA" id="TWRICVC"/>
<dbReference type="OrthoDB" id="6427922at2759"/>
<dbReference type="TreeFam" id="TF351788"/>
<dbReference type="Proteomes" id="UP000009136">
    <property type="component" value="Chromosome 7"/>
</dbReference>
<dbReference type="Bgee" id="ENSBTAG00000009478">
    <property type="expression patterns" value="Expressed in oocyte and 79 other cell types or tissues"/>
</dbReference>
<dbReference type="GO" id="GO:0005737">
    <property type="term" value="C:cytoplasm"/>
    <property type="evidence" value="ECO:0007669"/>
    <property type="project" value="Ensembl"/>
</dbReference>
<dbReference type="GO" id="GO:0005615">
    <property type="term" value="C:extracellular space"/>
    <property type="evidence" value="ECO:0000318"/>
    <property type="project" value="GO_Central"/>
</dbReference>
<dbReference type="GO" id="GO:0005125">
    <property type="term" value="F:cytokine activity"/>
    <property type="evidence" value="ECO:0000318"/>
    <property type="project" value="GO_Central"/>
</dbReference>
<dbReference type="GO" id="GO:0008083">
    <property type="term" value="F:growth factor activity"/>
    <property type="evidence" value="ECO:0007669"/>
    <property type="project" value="UniProtKB-KW"/>
</dbReference>
<dbReference type="GO" id="GO:0030308">
    <property type="term" value="P:negative regulation of cell growth"/>
    <property type="evidence" value="ECO:0007669"/>
    <property type="project" value="Ensembl"/>
</dbReference>
<dbReference type="GO" id="GO:0001555">
    <property type="term" value="P:oocyte growth"/>
    <property type="evidence" value="ECO:0007669"/>
    <property type="project" value="Ensembl"/>
</dbReference>
<dbReference type="GO" id="GO:0008284">
    <property type="term" value="P:positive regulation of cell population proliferation"/>
    <property type="evidence" value="ECO:0007669"/>
    <property type="project" value="Ensembl"/>
</dbReference>
<dbReference type="GO" id="GO:2000870">
    <property type="term" value="P:regulation of progesterone secretion"/>
    <property type="evidence" value="ECO:0007669"/>
    <property type="project" value="Ensembl"/>
</dbReference>
<dbReference type="CDD" id="cd19403">
    <property type="entry name" value="TGF_beta_GDF9"/>
    <property type="match status" value="1"/>
</dbReference>
<dbReference type="FunFam" id="2.10.90.10:FF:000012">
    <property type="entry name" value="Growth/differentiation factor 9 (Predicted)"/>
    <property type="match status" value="1"/>
</dbReference>
<dbReference type="Gene3D" id="2.10.90.10">
    <property type="entry name" value="Cystine-knot cytokines"/>
    <property type="match status" value="1"/>
</dbReference>
<dbReference type="InterPro" id="IPR029034">
    <property type="entry name" value="Cystine-knot_cytokine"/>
</dbReference>
<dbReference type="InterPro" id="IPR015617">
    <property type="entry name" value="Growth_differentiation_fac-9_C"/>
</dbReference>
<dbReference type="InterPro" id="IPR001839">
    <property type="entry name" value="TGF-b_C"/>
</dbReference>
<dbReference type="InterPro" id="IPR015615">
    <property type="entry name" value="TGF-beta-rel"/>
</dbReference>
<dbReference type="InterPro" id="IPR017948">
    <property type="entry name" value="TGFb_CS"/>
</dbReference>
<dbReference type="PANTHER" id="PTHR11848:SF19">
    <property type="entry name" value="GROWTH_DIFFERENTIATION FACTOR 9"/>
    <property type="match status" value="1"/>
</dbReference>
<dbReference type="PANTHER" id="PTHR11848">
    <property type="entry name" value="TGF-BETA FAMILY"/>
    <property type="match status" value="1"/>
</dbReference>
<dbReference type="Pfam" id="PF00019">
    <property type="entry name" value="TGF_beta"/>
    <property type="match status" value="1"/>
</dbReference>
<dbReference type="SMART" id="SM00204">
    <property type="entry name" value="TGFB"/>
    <property type="match status" value="1"/>
</dbReference>
<dbReference type="SUPFAM" id="SSF57501">
    <property type="entry name" value="Cystine-knot cytokines"/>
    <property type="match status" value="1"/>
</dbReference>
<dbReference type="PROSITE" id="PS00250">
    <property type="entry name" value="TGF_BETA_1"/>
    <property type="match status" value="1"/>
</dbReference>
<dbReference type="PROSITE" id="PS51362">
    <property type="entry name" value="TGF_BETA_2"/>
    <property type="match status" value="1"/>
</dbReference>
<name>GDF9_BOVIN</name>
<reference key="1">
    <citation type="journal article" date="2001" name="Cloning">
        <title>Molecular cloning of a cDNA encoding a bovine growth differentiation factor-9 (GDF-9) and expression of GDF-9 in bovine ovarian oocytes and in vitro-produced embryos.</title>
        <authorList>
            <person name="Sendai Y."/>
            <person name="Itoh T."/>
            <person name="Yamashita S."/>
            <person name="Hoshi H."/>
        </authorList>
    </citation>
    <scope>NUCLEOTIDE SEQUENCE [MRNA]</scope>
</reference>
<reference key="2">
    <citation type="submission" date="2001-09" db="EMBL/GenBank/DDBJ databases">
        <authorList>
            <person name="Smith T.P.L."/>
            <person name="Kappes S.M."/>
        </authorList>
    </citation>
    <scope>NUCLEOTIDE SEQUENCE [MRNA]</scope>
</reference>
<reference key="3">
    <citation type="journal article" date="2012" name="Mol. Cell. Endocrinol.">
        <title>The ratio of growth differentiation factor 9: bone morphogenetic protein 15 mRNA expression is tightly co-regulated and differs between species over a wide range of ovulation rates.</title>
        <authorList>
            <person name="Crawford J.L."/>
            <person name="McNatty K.P."/>
        </authorList>
    </citation>
    <scope>SPECIES-SPECIFIC OVULATION RATE DETERMINATION</scope>
</reference>
<gene>
    <name type="primary">GDF9</name>
</gene>
<accession>Q9GK68</accession>
<comment type="function">
    <text evidence="1">Required for ovarian folliculogenesis.</text>
</comment>
<comment type="subunit">
    <text evidence="1 4">Homodimer or heterodimer (Potential). But, in contrast to other members of this family, cannot be disulfide-linked (By similarity).</text>
</comment>
<comment type="subcellular location">
    <subcellularLocation>
        <location evidence="1">Secreted</location>
    </subcellularLocation>
</comment>
<comment type="PTM">
    <text evidence="1">Phosphorylated; phosphorylation is critical for GDF9 function.</text>
</comment>
<comment type="miscellaneous">
    <text>Ovarian physiology and fertility are controlled by endocrine and paracrine signals. These act in a species-dependent manner and determine the ovulation quota in different mammalian species. While humans, and mammals such as the cow or red deer, normally ovulate only one egg per cycle, other mammals such as mouse and pig can ovulate in excess of ten per cycle. The mechanisms that regulate the species-specific differences in the number of follicles that go onto ovulate during each reproductive cycle are poorly understood. According to PubMed:21970812, mRNA expression levels of GDF9 and BMP15 are tightly coregulated within each species and influence species-specific ovulation-rates.</text>
</comment>
<comment type="similarity">
    <text evidence="4">Belongs to the TGF-beta family.</text>
</comment>
<feature type="signal peptide" evidence="2">
    <location>
        <begin position="1"/>
        <end position="25"/>
    </location>
</feature>
<feature type="propeptide" id="PRO_0000244403" evidence="2">
    <location>
        <begin position="26"/>
        <end position="318"/>
    </location>
</feature>
<feature type="chain" id="PRO_0000244404" description="Growth/differentiation factor 9">
    <location>
        <begin position="319"/>
        <end position="453"/>
    </location>
</feature>
<feature type="region of interest" description="Disordered" evidence="3">
    <location>
        <begin position="281"/>
        <end position="300"/>
    </location>
</feature>
<feature type="glycosylation site" description="N-linked (GlcNAc...) asparagine" evidence="2">
    <location>
        <position position="106"/>
    </location>
</feature>
<feature type="glycosylation site" description="N-linked (GlcNAc...) asparagine" evidence="2">
    <location>
        <position position="163"/>
    </location>
</feature>
<feature type="glycosylation site" description="N-linked (GlcNAc...) asparagine" evidence="2">
    <location>
        <position position="236"/>
    </location>
</feature>
<feature type="glycosylation site" description="N-linked (GlcNAc...) asparagine" evidence="2">
    <location>
        <position position="255"/>
    </location>
</feature>
<feature type="glycosylation site" description="N-linked (GlcNAc...) asparagine" evidence="2">
    <location>
        <position position="269"/>
    </location>
</feature>
<feature type="glycosylation site" description="N-linked (GlcNAc...) asparagine" evidence="2">
    <location>
        <position position="337"/>
    </location>
</feature>
<feature type="disulfide bond" evidence="1">
    <location>
        <begin position="352"/>
        <end position="418"/>
    </location>
</feature>
<feature type="disulfide bond" evidence="1">
    <location>
        <begin position="381"/>
        <end position="450"/>
    </location>
</feature>
<feature type="disulfide bond" evidence="1">
    <location>
        <begin position="385"/>
        <end position="452"/>
    </location>
</feature>
<sequence>MALPNKFFLWFCCFAWLCFPISLDSQPSRGEAQIVARTALESEAETWSLLKHLDGRHRPGLLSPLLNVLYDGHREPPRLQPDDRALSYMKRLYKAYATKEGTPKSNRSHLYNTVRLFTPCAQHKQAPGDQAAGTLPSVDLLFNLDRVTVVEHLFKSVLLYTFNNSISFPFPVKCICNLVIKEPEFSSKTLPRAPYSFTFNSQFEFRKKYKWIEIDVTAPLEPLVASHKRNIHMSVNFTCVKDQLQHPSARDSLFNMTLLLAPSLLLYLNDTSAQAFHRWHSLHPKRKPSQDPDQKRGLSACPMGEEAAEGVRLSRHRRDQESVSSELKKPLVPASFNLSEYFKQFLFPQNECELHDFRLSFSQLKWDNWIVAPHKYNPRYCKGDCPRAVGHRYGSPVHTMVMNIIHEKLDSSVPRPSCVPAKYSPLSVLAIEPDGSIAYKEYEDMIATKCTCR</sequence>
<evidence type="ECO:0000250" key="1"/>
<evidence type="ECO:0000255" key="2"/>
<evidence type="ECO:0000256" key="3">
    <source>
        <dbReference type="SAM" id="MobiDB-lite"/>
    </source>
</evidence>
<evidence type="ECO:0000305" key="4"/>
<protein>
    <recommendedName>
        <fullName>Growth/differentiation factor 9</fullName>
        <shortName>GDF-9</shortName>
    </recommendedName>
</protein>
<organism>
    <name type="scientific">Bos taurus</name>
    <name type="common">Bovine</name>
    <dbReference type="NCBI Taxonomy" id="9913"/>
    <lineage>
        <taxon>Eukaryota</taxon>
        <taxon>Metazoa</taxon>
        <taxon>Chordata</taxon>
        <taxon>Craniata</taxon>
        <taxon>Vertebrata</taxon>
        <taxon>Euteleostomi</taxon>
        <taxon>Mammalia</taxon>
        <taxon>Eutheria</taxon>
        <taxon>Laurasiatheria</taxon>
        <taxon>Artiodactyla</taxon>
        <taxon>Ruminantia</taxon>
        <taxon>Pecora</taxon>
        <taxon>Bovidae</taxon>
        <taxon>Bovinae</taxon>
        <taxon>Bos</taxon>
    </lineage>
</organism>